<evidence type="ECO:0000250" key="1"/>
<evidence type="ECO:0000255" key="2"/>
<evidence type="ECO:0000255" key="3">
    <source>
        <dbReference type="PROSITE-ProRule" id="PRU00289"/>
    </source>
</evidence>
<evidence type="ECO:0000256" key="4">
    <source>
        <dbReference type="SAM" id="MobiDB-lite"/>
    </source>
</evidence>
<evidence type="ECO:0000305" key="5"/>
<gene>
    <name type="primary">ftsK</name>
    <name type="synonym">spoIIIE</name>
    <name type="ordered locus">BH2395</name>
</gene>
<keyword id="KW-0067">ATP-binding</keyword>
<keyword id="KW-0131">Cell cycle</keyword>
<keyword id="KW-0132">Cell division</keyword>
<keyword id="KW-1003">Cell membrane</keyword>
<keyword id="KW-0159">Chromosome partition</keyword>
<keyword id="KW-0238">DNA-binding</keyword>
<keyword id="KW-0472">Membrane</keyword>
<keyword id="KW-0547">Nucleotide-binding</keyword>
<keyword id="KW-1185">Reference proteome</keyword>
<keyword id="KW-0812">Transmembrane</keyword>
<keyword id="KW-1133">Transmembrane helix</keyword>
<proteinExistence type="inferred from homology"/>
<feature type="chain" id="PRO_0000098238" description="DNA translocase FtsK">
    <location>
        <begin position="1"/>
        <end position="789"/>
    </location>
</feature>
<feature type="transmembrane region" description="Helical" evidence="2">
    <location>
        <begin position="20"/>
        <end position="40"/>
    </location>
</feature>
<feature type="transmembrane region" description="Helical" evidence="2">
    <location>
        <begin position="49"/>
        <end position="69"/>
    </location>
</feature>
<feature type="transmembrane region" description="Helical" evidence="2">
    <location>
        <begin position="83"/>
        <end position="103"/>
    </location>
</feature>
<feature type="transmembrane region" description="Helical" evidence="2">
    <location>
        <begin position="152"/>
        <end position="172"/>
    </location>
</feature>
<feature type="topological domain" description="Cytoplasmic" evidence="2">
    <location>
        <begin position="173"/>
        <end position="789"/>
    </location>
</feature>
<feature type="domain" description="FtsK" evidence="3">
    <location>
        <begin position="452"/>
        <end position="648"/>
    </location>
</feature>
<feature type="region of interest" description="Disordered" evidence="4">
    <location>
        <begin position="226"/>
        <end position="302"/>
    </location>
</feature>
<feature type="compositionally biased region" description="Basic and acidic residues" evidence="4">
    <location>
        <begin position="275"/>
        <end position="291"/>
    </location>
</feature>
<feature type="binding site" evidence="3">
    <location>
        <begin position="472"/>
        <end position="477"/>
    </location>
    <ligand>
        <name>ATP</name>
        <dbReference type="ChEBI" id="CHEBI:30616"/>
    </ligand>
</feature>
<protein>
    <recommendedName>
        <fullName>DNA translocase FtsK</fullName>
    </recommendedName>
</protein>
<sequence length="789" mass="87422">MAKRKKKKKVAWQSQLTFELVGLGILVIAVVALAQLGTVGETLVRLFRFFLGEWYAVLSIALLVAALYIMVKREKPPLWSRRIGGLYLMLLSALLFSHVGLFGQLQGNEGFSDQSVIRNTWNLFWLDMYGEVQHSDLGGGMIGAIAYAASHFLFADGGTLFLCFILFMAGLILLTGHSITDLFGKAIRRTYLWVVDFIKGTWNEWKQFRKESKEKLEQDRKLLKERKEKKAAKRSRNEDPAQEENDQPLEIVDFSQRVSHEAKNDATVKQQVKPAKQEDQVSKEAPEEDKLASQGQEGEEMPTVSLATAVTPNDDYQLPTIELLKLPNNPNQSMEKRLLHKNAEKLRKTLESFGVKAHVSKVHLGPAVTKYEVNPHVGVKVSRIVNLADDLALALAAKDIRIEAPIPGKSAIGIEVPNQEVAIVTLREVLDSPQAKADRNVLSVGLGRDISGEPVFAPLNKMPHLLVAGATGSGKSVCINGIITSILLKAKPHEVKLMMIDPKMVELNVYNGIPHLLTPVVTEPKKASQALKKVVAEMERRYDLFSHSGTRNIEGYNEMITRQNEKEDAKQPTLPYIVVIVDELADLMMVASGDVEDSIARLAQMARAAGIHMILATQRPSVDVITGVIKANIPSRIAFGVSSQTDSRTILDTGGAEKLLGRGDMLYLPMGATKPTRVQGAFLSDEEVETIVEFVVAQQKAQYAEEMTPTEETKVTEKVDDELYDDAVNLVIEMNSASVSMLQRRFRIGYTRAARLIDEMEARGIVGPYEGSKPREVLVQAQDDEASSH</sequence>
<dbReference type="EMBL" id="BA000004">
    <property type="protein sequence ID" value="BAB06114.1"/>
    <property type="molecule type" value="Genomic_DNA"/>
</dbReference>
<dbReference type="PIR" id="C83949">
    <property type="entry name" value="C83949"/>
</dbReference>
<dbReference type="RefSeq" id="WP_010898548.1">
    <property type="nucleotide sequence ID" value="NC_002570.2"/>
</dbReference>
<dbReference type="SMR" id="Q9KA95"/>
<dbReference type="STRING" id="272558.gene:10728293"/>
<dbReference type="KEGG" id="bha:BH2395"/>
<dbReference type="eggNOG" id="COG1674">
    <property type="taxonomic scope" value="Bacteria"/>
</dbReference>
<dbReference type="HOGENOM" id="CLU_001981_9_6_9"/>
<dbReference type="OrthoDB" id="9807790at2"/>
<dbReference type="Proteomes" id="UP000001258">
    <property type="component" value="Chromosome"/>
</dbReference>
<dbReference type="GO" id="GO:0005886">
    <property type="term" value="C:plasma membrane"/>
    <property type="evidence" value="ECO:0007669"/>
    <property type="project" value="UniProtKB-SubCell"/>
</dbReference>
<dbReference type="GO" id="GO:0005524">
    <property type="term" value="F:ATP binding"/>
    <property type="evidence" value="ECO:0007669"/>
    <property type="project" value="UniProtKB-KW"/>
</dbReference>
<dbReference type="GO" id="GO:0016887">
    <property type="term" value="F:ATP hydrolysis activity"/>
    <property type="evidence" value="ECO:0007669"/>
    <property type="project" value="InterPro"/>
</dbReference>
<dbReference type="GO" id="GO:0003677">
    <property type="term" value="F:DNA binding"/>
    <property type="evidence" value="ECO:0007669"/>
    <property type="project" value="UniProtKB-KW"/>
</dbReference>
<dbReference type="GO" id="GO:0051301">
    <property type="term" value="P:cell division"/>
    <property type="evidence" value="ECO:0007669"/>
    <property type="project" value="UniProtKB-KW"/>
</dbReference>
<dbReference type="GO" id="GO:0007059">
    <property type="term" value="P:chromosome segregation"/>
    <property type="evidence" value="ECO:0007669"/>
    <property type="project" value="UniProtKB-KW"/>
</dbReference>
<dbReference type="CDD" id="cd01127">
    <property type="entry name" value="TrwB_TraG_TraD_VirD4"/>
    <property type="match status" value="1"/>
</dbReference>
<dbReference type="Gene3D" id="3.30.980.40">
    <property type="match status" value="1"/>
</dbReference>
<dbReference type="Gene3D" id="3.40.50.300">
    <property type="entry name" value="P-loop containing nucleotide triphosphate hydrolases"/>
    <property type="match status" value="1"/>
</dbReference>
<dbReference type="Gene3D" id="1.10.10.10">
    <property type="entry name" value="Winged helix-like DNA-binding domain superfamily/Winged helix DNA-binding domain"/>
    <property type="match status" value="1"/>
</dbReference>
<dbReference type="InterPro" id="IPR003593">
    <property type="entry name" value="AAA+_ATPase"/>
</dbReference>
<dbReference type="InterPro" id="IPR050206">
    <property type="entry name" value="FtsK/SpoIIIE/SftA"/>
</dbReference>
<dbReference type="InterPro" id="IPR041027">
    <property type="entry name" value="FtsK_alpha"/>
</dbReference>
<dbReference type="InterPro" id="IPR002543">
    <property type="entry name" value="FtsK_dom"/>
</dbReference>
<dbReference type="InterPro" id="IPR018541">
    <property type="entry name" value="Ftsk_gamma"/>
</dbReference>
<dbReference type="InterPro" id="IPR027417">
    <property type="entry name" value="P-loop_NTPase"/>
</dbReference>
<dbReference type="InterPro" id="IPR036388">
    <property type="entry name" value="WH-like_DNA-bd_sf"/>
</dbReference>
<dbReference type="InterPro" id="IPR036390">
    <property type="entry name" value="WH_DNA-bd_sf"/>
</dbReference>
<dbReference type="PANTHER" id="PTHR22683:SF41">
    <property type="entry name" value="DNA TRANSLOCASE FTSK"/>
    <property type="match status" value="1"/>
</dbReference>
<dbReference type="PANTHER" id="PTHR22683">
    <property type="entry name" value="SPORULATION PROTEIN RELATED"/>
    <property type="match status" value="1"/>
</dbReference>
<dbReference type="Pfam" id="PF17854">
    <property type="entry name" value="FtsK_alpha"/>
    <property type="match status" value="1"/>
</dbReference>
<dbReference type="Pfam" id="PF09397">
    <property type="entry name" value="FtsK_gamma"/>
    <property type="match status" value="1"/>
</dbReference>
<dbReference type="Pfam" id="PF01580">
    <property type="entry name" value="FtsK_SpoIIIE"/>
    <property type="match status" value="1"/>
</dbReference>
<dbReference type="SMART" id="SM00382">
    <property type="entry name" value="AAA"/>
    <property type="match status" value="1"/>
</dbReference>
<dbReference type="SMART" id="SM00843">
    <property type="entry name" value="Ftsk_gamma"/>
    <property type="match status" value="1"/>
</dbReference>
<dbReference type="SUPFAM" id="SSF52540">
    <property type="entry name" value="P-loop containing nucleoside triphosphate hydrolases"/>
    <property type="match status" value="1"/>
</dbReference>
<dbReference type="SUPFAM" id="SSF46785">
    <property type="entry name" value="Winged helix' DNA-binding domain"/>
    <property type="match status" value="1"/>
</dbReference>
<dbReference type="PROSITE" id="PS50901">
    <property type="entry name" value="FTSK"/>
    <property type="match status" value="1"/>
</dbReference>
<reference key="1">
    <citation type="journal article" date="2000" name="Nucleic Acids Res.">
        <title>Complete genome sequence of the alkaliphilic bacterium Bacillus halodurans and genomic sequence comparison with Bacillus subtilis.</title>
        <authorList>
            <person name="Takami H."/>
            <person name="Nakasone K."/>
            <person name="Takaki Y."/>
            <person name="Maeno G."/>
            <person name="Sasaki R."/>
            <person name="Masui N."/>
            <person name="Fuji F."/>
            <person name="Hirama C."/>
            <person name="Nakamura Y."/>
            <person name="Ogasawara N."/>
            <person name="Kuhara S."/>
            <person name="Horikoshi K."/>
        </authorList>
    </citation>
    <scope>NUCLEOTIDE SEQUENCE [LARGE SCALE GENOMIC DNA]</scope>
    <source>
        <strain>ATCC BAA-125 / DSM 18197 / FERM 7344 / JCM 9153 / C-125</strain>
    </source>
</reference>
<name>FTSK_HALH5</name>
<organism>
    <name type="scientific">Halalkalibacterium halodurans (strain ATCC BAA-125 / DSM 18197 / FERM 7344 / JCM 9153 / C-125)</name>
    <name type="common">Bacillus halodurans</name>
    <dbReference type="NCBI Taxonomy" id="272558"/>
    <lineage>
        <taxon>Bacteria</taxon>
        <taxon>Bacillati</taxon>
        <taxon>Bacillota</taxon>
        <taxon>Bacilli</taxon>
        <taxon>Bacillales</taxon>
        <taxon>Bacillaceae</taxon>
        <taxon>Halalkalibacterium (ex Joshi et al. 2022)</taxon>
    </lineage>
</organism>
<comment type="function">
    <text evidence="1">Essential cell division protein that coordinates cell division and chromosome segregation. The N-terminus is involved in assembly of the cell-division machinery. The C-terminus functions as a DNA motor that moves dsDNA in an ATP-dependent manner towards the dif recombination site, which is located within the replication terminus region. Required for activation of the Xer recombinase, allowing activation of chromosome unlinking by recombination (By similarity).</text>
</comment>
<comment type="subunit">
    <text evidence="1">Homohexamer. Forms a ring that surrounds DNA (By similarity).</text>
</comment>
<comment type="subcellular location">
    <subcellularLocation>
        <location evidence="1">Cell membrane</location>
        <topology evidence="1">Multi-pass membrane protein</topology>
    </subcellularLocation>
    <text evidence="1">Located at the septum.</text>
</comment>
<comment type="domain">
    <text evidence="1">Consists of an N-terminal domain, which is sufficient for the localization to the septal ring and is required for cell division, followed by a linker domain, and a C-terminal domain, which forms the translocation motor involved in chromosome segregation. The C-terminal domain can be further subdivided into alpha, beta and gamma subdomains. The alpha and beta subdomains form the DNA pump, and the gamma subdomain is a regulatory subdomain (By similarity).</text>
</comment>
<comment type="similarity">
    <text evidence="5">Belongs to the FtsK/SpoIIIE/SftA family.</text>
</comment>
<accession>Q9KA95</accession>